<protein>
    <recommendedName>
        <fullName>TNF receptor-associated factor family protein DDB_G0273435/DDB_G0273505</fullName>
    </recommendedName>
</protein>
<proteinExistence type="inferred from homology"/>
<reference key="1">
    <citation type="journal article" date="2002" name="Nature">
        <title>Sequence and analysis of chromosome 2 of Dictyostelium discoideum.</title>
        <authorList>
            <person name="Gloeckner G."/>
            <person name="Eichinger L."/>
            <person name="Szafranski K."/>
            <person name="Pachebat J.A."/>
            <person name="Bankier A.T."/>
            <person name="Dear P.H."/>
            <person name="Lehmann R."/>
            <person name="Baumgart C."/>
            <person name="Parra G."/>
            <person name="Abril J.F."/>
            <person name="Guigo R."/>
            <person name="Kumpf K."/>
            <person name="Tunggal B."/>
            <person name="Cox E.C."/>
            <person name="Quail M.A."/>
            <person name="Platzer M."/>
            <person name="Rosenthal A."/>
            <person name="Noegel A.A."/>
        </authorList>
    </citation>
    <scope>NUCLEOTIDE SEQUENCE [LARGE SCALE GENOMIC DNA]</scope>
    <source>
        <strain>AX4</strain>
    </source>
</reference>
<reference key="2">
    <citation type="journal article" date="2005" name="Nature">
        <title>The genome of the social amoeba Dictyostelium discoideum.</title>
        <authorList>
            <person name="Eichinger L."/>
            <person name="Pachebat J.A."/>
            <person name="Gloeckner G."/>
            <person name="Rajandream M.A."/>
            <person name="Sucgang R."/>
            <person name="Berriman M."/>
            <person name="Song J."/>
            <person name="Olsen R."/>
            <person name="Szafranski K."/>
            <person name="Xu Q."/>
            <person name="Tunggal B."/>
            <person name="Kummerfeld S."/>
            <person name="Madera M."/>
            <person name="Konfortov B.A."/>
            <person name="Rivero F."/>
            <person name="Bankier A.T."/>
            <person name="Lehmann R."/>
            <person name="Hamlin N."/>
            <person name="Davies R."/>
            <person name="Gaudet P."/>
            <person name="Fey P."/>
            <person name="Pilcher K."/>
            <person name="Chen G."/>
            <person name="Saunders D."/>
            <person name="Sodergren E.J."/>
            <person name="Davis P."/>
            <person name="Kerhornou A."/>
            <person name="Nie X."/>
            <person name="Hall N."/>
            <person name="Anjard C."/>
            <person name="Hemphill L."/>
            <person name="Bason N."/>
            <person name="Farbrother P."/>
            <person name="Desany B."/>
            <person name="Just E."/>
            <person name="Morio T."/>
            <person name="Rost R."/>
            <person name="Churcher C.M."/>
            <person name="Cooper J."/>
            <person name="Haydock S."/>
            <person name="van Driessche N."/>
            <person name="Cronin A."/>
            <person name="Goodhead I."/>
            <person name="Muzny D.M."/>
            <person name="Mourier T."/>
            <person name="Pain A."/>
            <person name="Lu M."/>
            <person name="Harper D."/>
            <person name="Lindsay R."/>
            <person name="Hauser H."/>
            <person name="James K.D."/>
            <person name="Quiles M."/>
            <person name="Madan Babu M."/>
            <person name="Saito T."/>
            <person name="Buchrieser C."/>
            <person name="Wardroper A."/>
            <person name="Felder M."/>
            <person name="Thangavelu M."/>
            <person name="Johnson D."/>
            <person name="Knights A."/>
            <person name="Loulseged H."/>
            <person name="Mungall K.L."/>
            <person name="Oliver K."/>
            <person name="Price C."/>
            <person name="Quail M.A."/>
            <person name="Urushihara H."/>
            <person name="Hernandez J."/>
            <person name="Rabbinowitsch E."/>
            <person name="Steffen D."/>
            <person name="Sanders M."/>
            <person name="Ma J."/>
            <person name="Kohara Y."/>
            <person name="Sharp S."/>
            <person name="Simmonds M.N."/>
            <person name="Spiegler S."/>
            <person name="Tivey A."/>
            <person name="Sugano S."/>
            <person name="White B."/>
            <person name="Walker D."/>
            <person name="Woodward J.R."/>
            <person name="Winckler T."/>
            <person name="Tanaka Y."/>
            <person name="Shaulsky G."/>
            <person name="Schleicher M."/>
            <person name="Weinstock G.M."/>
            <person name="Rosenthal A."/>
            <person name="Cox E.C."/>
            <person name="Chisholm R.L."/>
            <person name="Gibbs R.A."/>
            <person name="Loomis W.F."/>
            <person name="Platzer M."/>
            <person name="Kay R.R."/>
            <person name="Williams J.G."/>
            <person name="Dear P.H."/>
            <person name="Noegel A.A."/>
            <person name="Barrell B.G."/>
            <person name="Kuspa A."/>
        </authorList>
    </citation>
    <scope>NUCLEOTIDE SEQUENCE [LARGE SCALE GENOMIC DNA]</scope>
    <source>
        <strain>AX4</strain>
    </source>
</reference>
<organism>
    <name type="scientific">Dictyostelium discoideum</name>
    <name type="common">Social amoeba</name>
    <dbReference type="NCBI Taxonomy" id="44689"/>
    <lineage>
        <taxon>Eukaryota</taxon>
        <taxon>Amoebozoa</taxon>
        <taxon>Evosea</taxon>
        <taxon>Eumycetozoa</taxon>
        <taxon>Dictyostelia</taxon>
        <taxon>Dictyosteliales</taxon>
        <taxon>Dictyosteliaceae</taxon>
        <taxon>Dictyostelium</taxon>
    </lineage>
</organism>
<gene>
    <name type="ORF">DDB_G0273435</name>
</gene>
<gene>
    <name type="ORF">DDB_G0273505</name>
</gene>
<dbReference type="EMBL" id="AAFI02000010">
    <property type="protein sequence ID" value="EAL70672.1"/>
    <property type="molecule type" value="Genomic_DNA"/>
</dbReference>
<dbReference type="EMBL" id="AAFI02000010">
    <property type="protein sequence ID" value="EAL70707.1"/>
    <property type="molecule type" value="Genomic_DNA"/>
</dbReference>
<dbReference type="RefSeq" id="XP_644617.1">
    <property type="nucleotide sequence ID" value="XM_639525.1"/>
</dbReference>
<dbReference type="RefSeq" id="XP_644633.1">
    <property type="nucleotide sequence ID" value="XM_639541.1"/>
</dbReference>
<dbReference type="SMR" id="Q557K2"/>
<dbReference type="FunCoup" id="Q557K2">
    <property type="interactions" value="10"/>
</dbReference>
<dbReference type="STRING" id="44689.Q557K2"/>
<dbReference type="PaxDb" id="44689-DDB0168209"/>
<dbReference type="EnsemblProtists" id="EAL70672">
    <property type="protein sequence ID" value="EAL70672"/>
    <property type="gene ID" value="DDB_G0273435"/>
</dbReference>
<dbReference type="EnsemblProtists" id="EAL70707">
    <property type="protein sequence ID" value="EAL70707"/>
    <property type="gene ID" value="DDB_G0273505"/>
</dbReference>
<dbReference type="GeneID" id="8618981"/>
<dbReference type="GeneID" id="8618996"/>
<dbReference type="KEGG" id="ddi:DDB_G0273435"/>
<dbReference type="KEGG" id="ddi:DDB_G0273505"/>
<dbReference type="dictyBase" id="DDB_G0273435"/>
<dbReference type="dictyBase" id="DDB_G0273505"/>
<dbReference type="VEuPathDB" id="AmoebaDB:DDB_G0273435"/>
<dbReference type="eggNOG" id="KOG0297">
    <property type="taxonomic scope" value="Eukaryota"/>
</dbReference>
<dbReference type="HOGENOM" id="CLU_040980_0_0_1"/>
<dbReference type="InParanoid" id="Q557K2"/>
<dbReference type="OMA" id="NCGERIN"/>
<dbReference type="PhylomeDB" id="Q557K2"/>
<dbReference type="PRO" id="PR:Q557K2"/>
<dbReference type="Proteomes" id="UP000002195">
    <property type="component" value="Chromosome 2"/>
</dbReference>
<dbReference type="GO" id="GO:0005737">
    <property type="term" value="C:cytoplasm"/>
    <property type="evidence" value="ECO:0000318"/>
    <property type="project" value="GO_Central"/>
</dbReference>
<dbReference type="GO" id="GO:0008270">
    <property type="term" value="F:zinc ion binding"/>
    <property type="evidence" value="ECO:0007669"/>
    <property type="project" value="UniProtKB-KW"/>
</dbReference>
<dbReference type="Gene3D" id="2.60.210.10">
    <property type="entry name" value="Apoptosis, Tumor Necrosis Factor Receptor Associated Protein 2, Chain A"/>
    <property type="match status" value="1"/>
</dbReference>
<dbReference type="Gene3D" id="3.30.40.10">
    <property type="entry name" value="Zinc/RING finger domain, C3HC4 (zinc finger)"/>
    <property type="match status" value="2"/>
</dbReference>
<dbReference type="InterPro" id="IPR008974">
    <property type="entry name" value="TRAF-like"/>
</dbReference>
<dbReference type="InterPro" id="IPR001841">
    <property type="entry name" value="Znf_RING"/>
</dbReference>
<dbReference type="InterPro" id="IPR013083">
    <property type="entry name" value="Znf_RING/FYVE/PHD"/>
</dbReference>
<dbReference type="InterPro" id="IPR001293">
    <property type="entry name" value="Znf_TRAF"/>
</dbReference>
<dbReference type="PANTHER" id="PTHR10131">
    <property type="entry name" value="TNF RECEPTOR ASSOCIATED FACTOR"/>
    <property type="match status" value="1"/>
</dbReference>
<dbReference type="PANTHER" id="PTHR10131:SF69">
    <property type="entry name" value="TNF RECEPTOR-ASSOCIATED FACTOR FAMILY PROTEIN DDB_G0273435_DDB_G0273505"/>
    <property type="match status" value="1"/>
</dbReference>
<dbReference type="Pfam" id="PF02176">
    <property type="entry name" value="zf-TRAF"/>
    <property type="match status" value="1"/>
</dbReference>
<dbReference type="SUPFAM" id="SSF57850">
    <property type="entry name" value="RING/U-box"/>
    <property type="match status" value="1"/>
</dbReference>
<dbReference type="SUPFAM" id="SSF49599">
    <property type="entry name" value="TRAF domain-like"/>
    <property type="match status" value="1"/>
</dbReference>
<dbReference type="PROSITE" id="PS50089">
    <property type="entry name" value="ZF_RING_2"/>
    <property type="match status" value="1"/>
</dbReference>
<dbReference type="PROSITE" id="PS50145">
    <property type="entry name" value="ZF_TRAF"/>
    <property type="match status" value="1"/>
</dbReference>
<accession>Q557K2</accession>
<accession>Q86KI2</accession>
<comment type="function">
    <text evidence="1">Probable adapter protein and signal transducer that links members of the tumor necrosis factor receptor family to different signaling pathways by association with the receptor cytoplasmic domain and kinases.</text>
</comment>
<comment type="subcellular location">
    <subcellularLocation>
        <location evidence="1">Cytoplasm</location>
    </subcellularLocation>
</comment>
<comment type="domain">
    <text>The MATH/TRAF domain binds to receptor cytoplasmic domains.</text>
</comment>
<comment type="similarity">
    <text evidence="5">Belongs to the TNF receptor-associated factor family. A subfamily.</text>
</comment>
<comment type="caution">
    <text evidence="5">The gene for this protein is duplicated in strains AX3 and AX4. These strains contain a duplication of a segment of 750 kb of chromosome 2 compared to the corresponding sequence in strain AX2.</text>
</comment>
<evidence type="ECO:0000250" key="1"/>
<evidence type="ECO:0000255" key="2"/>
<evidence type="ECO:0000255" key="3">
    <source>
        <dbReference type="PROSITE-ProRule" id="PRU00175"/>
    </source>
</evidence>
<evidence type="ECO:0000255" key="4">
    <source>
        <dbReference type="PROSITE-ProRule" id="PRU00207"/>
    </source>
</evidence>
<evidence type="ECO:0000305" key="5"/>
<feature type="chain" id="PRO_0000393754" description="TNF receptor-associated factor family protein DDB_G0273435/DDB_G0273505">
    <location>
        <begin position="1"/>
        <end position="409"/>
    </location>
</feature>
<feature type="domain" description="MATH">
    <location>
        <begin position="252"/>
        <end position="380"/>
    </location>
</feature>
<feature type="zinc finger region" description="RING-type; degenerate" evidence="3">
    <location>
        <begin position="20"/>
        <end position="59"/>
    </location>
</feature>
<feature type="zinc finger region" description="TRAF-type 1" evidence="4">
    <location>
        <begin position="75"/>
        <end position="145"/>
    </location>
</feature>
<feature type="zinc finger region" description="TRAF-type 2" evidence="4">
    <location>
        <begin position="145"/>
        <end position="201"/>
    </location>
</feature>
<feature type="coiled-coil region" evidence="2">
    <location>
        <begin position="221"/>
        <end position="250"/>
    </location>
</feature>
<keyword id="KW-0175">Coiled coil</keyword>
<keyword id="KW-0963">Cytoplasm</keyword>
<keyword id="KW-0479">Metal-binding</keyword>
<keyword id="KW-1185">Reference proteome</keyword>
<keyword id="KW-0677">Repeat</keyword>
<keyword id="KW-0862">Zinc</keyword>
<keyword id="KW-0863">Zinc-finger</keyword>
<name>Y3435_DICDI</name>
<sequence>MKYSIDDLIFSKDIDEDLYCQLCCNLMNESVSCPNGHCLCKGCFHKQIETVKSECPICCIPVTIQTLCKNIYLQKHINNLKVYCPNSFLNNDNNKLILDEKKGCKEILTIEQLKNGKHLKECKFTFVSCEYNEKCGKYRMNEIENHQDQCNYYPTKCFYCKNDFERMNLSNHLLLDCPLVIIGCRYKDGGCNETFPRHELSKHLALEDNHQQYISNIINGHQSLLKSTSKQLKQLRSSCEELETKLINNDYSFNGRWIIKQFSAHFDLFKENPFTNLIISPPIFLTPTKEFSLSLSADTVVNSVNCISVILSKQFQSSSTIKFSFEITNQSQTKSIKKEEKKKFSHLIGSSHSIEFPTSEIYNIHNKFIVNDQLIIKFNIKILSIQDEQQEIEESEENFNNTLITELEE</sequence>